<sequence>QSVKESEGGLFKPTDTLTLTCTVSGFSLSGYDMSWVRQAPGKGLEWIGVIYASGSTYYATWAKSRSTITRTSBTVBLMDSLTAQDTATYFCARGHTGLSYLKSSVDVWGPGTLVTVS</sequence>
<name>HV2B_RABIT</name>
<evidence type="ECO:0000255" key="1">
    <source>
        <dbReference type="PROSITE-ProRule" id="PRU00114"/>
    </source>
</evidence>
<evidence type="ECO:0000269" key="2">
    <source>
    </source>
</evidence>
<accession>P01828</accession>
<dbReference type="PIR" id="A02104">
    <property type="entry name" value="GARB2K"/>
</dbReference>
<dbReference type="FunCoup" id="P01828">
    <property type="interactions" value="255"/>
</dbReference>
<dbReference type="InParanoid" id="P01828"/>
<dbReference type="Proteomes" id="UP000001811">
    <property type="component" value="Unplaced"/>
</dbReference>
<dbReference type="GO" id="GO:0005576">
    <property type="term" value="C:extracellular region"/>
    <property type="evidence" value="ECO:0007669"/>
    <property type="project" value="UniProtKB-ARBA"/>
</dbReference>
<dbReference type="GO" id="GO:0019814">
    <property type="term" value="C:immunoglobulin complex"/>
    <property type="evidence" value="ECO:0007669"/>
    <property type="project" value="UniProtKB-KW"/>
</dbReference>
<dbReference type="GO" id="GO:0002250">
    <property type="term" value="P:adaptive immune response"/>
    <property type="evidence" value="ECO:0007669"/>
    <property type="project" value="UniProtKB-KW"/>
</dbReference>
<dbReference type="FunFam" id="2.60.40.10:FF:001878">
    <property type="entry name" value="Immunoglobulin heavy variable 1-4"/>
    <property type="match status" value="1"/>
</dbReference>
<dbReference type="Gene3D" id="2.60.40.10">
    <property type="entry name" value="Immunoglobulins"/>
    <property type="match status" value="1"/>
</dbReference>
<dbReference type="InterPro" id="IPR007110">
    <property type="entry name" value="Ig-like_dom"/>
</dbReference>
<dbReference type="InterPro" id="IPR036179">
    <property type="entry name" value="Ig-like_dom_sf"/>
</dbReference>
<dbReference type="InterPro" id="IPR013783">
    <property type="entry name" value="Ig-like_fold"/>
</dbReference>
<dbReference type="InterPro" id="IPR003599">
    <property type="entry name" value="Ig_sub"/>
</dbReference>
<dbReference type="InterPro" id="IPR013106">
    <property type="entry name" value="Ig_V-set"/>
</dbReference>
<dbReference type="InterPro" id="IPR050199">
    <property type="entry name" value="IgHV"/>
</dbReference>
<dbReference type="PANTHER" id="PTHR23266">
    <property type="entry name" value="IMMUNOGLOBULIN HEAVY CHAIN"/>
    <property type="match status" value="1"/>
</dbReference>
<dbReference type="Pfam" id="PF07686">
    <property type="entry name" value="V-set"/>
    <property type="match status" value="1"/>
</dbReference>
<dbReference type="SMART" id="SM00409">
    <property type="entry name" value="IG"/>
    <property type="match status" value="1"/>
</dbReference>
<dbReference type="SMART" id="SM00406">
    <property type="entry name" value="IGv"/>
    <property type="match status" value="1"/>
</dbReference>
<dbReference type="SUPFAM" id="SSF48726">
    <property type="entry name" value="Immunoglobulin"/>
    <property type="match status" value="1"/>
</dbReference>
<dbReference type="PROSITE" id="PS50835">
    <property type="entry name" value="IG_LIKE"/>
    <property type="match status" value="1"/>
</dbReference>
<feature type="chain" id="PRO_0000059937" description="Ig heavy chain V-A2 region K-25">
    <location>
        <begin position="1"/>
        <end position="117" status="greater than"/>
    </location>
</feature>
<feature type="domain" description="Ig-like">
    <location>
        <begin position="1"/>
        <end position="106"/>
    </location>
</feature>
<feature type="modified residue" description="Pyrrolidone carboxylic acid" evidence="2">
    <location>
        <position position="1"/>
    </location>
</feature>
<feature type="disulfide bond" evidence="1 2">
    <location>
        <begin position="21"/>
        <end position="91"/>
    </location>
</feature>
<feature type="non-terminal residue">
    <location>
        <position position="117"/>
    </location>
</feature>
<comment type="miscellaneous">
    <text>This chain was obtained from antibody to type III pneumococci and was isolated from the serum of a single rabbit.</text>
</comment>
<organism>
    <name type="scientific">Oryctolagus cuniculus</name>
    <name type="common">Rabbit</name>
    <dbReference type="NCBI Taxonomy" id="9986"/>
    <lineage>
        <taxon>Eukaryota</taxon>
        <taxon>Metazoa</taxon>
        <taxon>Chordata</taxon>
        <taxon>Craniata</taxon>
        <taxon>Vertebrata</taxon>
        <taxon>Euteleostomi</taxon>
        <taxon>Mammalia</taxon>
        <taxon>Eutheria</taxon>
        <taxon>Euarchontoglires</taxon>
        <taxon>Glires</taxon>
        <taxon>Lagomorpha</taxon>
        <taxon>Leporidae</taxon>
        <taxon>Oryctolagus</taxon>
    </lineage>
</organism>
<reference key="1">
    <citation type="journal article" date="1975" name="Biochem. J.">
        <title>Comparison of the amino acid sequences of the variable domains of two homogeneous rabbit antibodies to type III pneumococcal polysaccharide.</title>
        <authorList>
            <person name="Jaton J.-C."/>
        </authorList>
    </citation>
    <scope>PROTEIN SEQUENCE</scope>
    <scope>PYROGLUTAMATE FORMATION AT GLN-1</scope>
</reference>
<keyword id="KW-1064">Adaptive immunity</keyword>
<keyword id="KW-0903">Direct protein sequencing</keyword>
<keyword id="KW-1015">Disulfide bond</keyword>
<keyword id="KW-0391">Immunity</keyword>
<keyword id="KW-1280">Immunoglobulin</keyword>
<keyword id="KW-0873">Pyrrolidone carboxylic acid</keyword>
<keyword id="KW-1185">Reference proteome</keyword>
<protein>
    <recommendedName>
        <fullName>Ig heavy chain V-A2 region K-25</fullName>
    </recommendedName>
</protein>
<proteinExistence type="evidence at protein level"/>